<comment type="function">
    <text evidence="1 5 6 7">Required for normal acrosome reaction and for normal male fertility (PubMed:12110578, PubMed:15007175, PubMed:15161660). Can bind Cu(2+) (By similarity).</text>
</comment>
<comment type="subcellular location">
    <subcellularLocation>
        <location evidence="3">Cell membrane</location>
        <topology evidence="3">Lipid-anchor</topology>
        <topology evidence="3">GPI-anchor</topology>
    </subcellularLocation>
</comment>
<comment type="tissue specificity">
    <text evidence="2 3 5 7">Detected in testis (PubMed:10842180, PubMed:12110578, PubMed:15161660). Detected within seminiferous tubules, on round and elongated spermatids (at protein level) (PubMed:12110578). Not detected in brain (at protein level) (PubMed:10842180, PubMed:15161660). Detected in testis, and at low levels in heart (PubMed:10525406, PubMed:12110578). Expression in brain is very low and barely detectable (PubMed:10525406).</text>
</comment>
<comment type="developmental stage">
    <text evidence="2">Expressed during embryogenesis.</text>
</comment>
<comment type="domain">
    <text evidence="1">A short helical region is required and sufficient for Cu(2+) binding.</text>
</comment>
<comment type="PTM">
    <text evidence="2 3">N-glycosylated (PubMed:10525406, PubMed:10842180). N-glycosylated at two distinct sites (PubMed:10842180).</text>
</comment>
<comment type="PTM">
    <text evidence="1">O-glycosylated.</text>
</comment>
<comment type="disruption phenotype">
    <text evidence="5 6 7">Mice are born at the expected Mendelian rate and appear grossly normal and healthy. Females are fertile, but males are almost completely sterile, in spite of normal mating behavior (PubMed:12110578, PubMed:15161660). Two independent studies conclude that male sterility is due to impaired acrosome reaction, but describe contradictory effects on spermatogenesis, possibly due to the use of different mouse strains (PubMed:12110578, PubMed:15161660). Spermatogenesis is normal, with normal sperm counts, normal sperm motility, and no malformation of the sperm head or tail (PubMed:15161660). Late stages of spermiogenesis are impaired, leading to reduced numbers of mature spermatozoa in seminiferous tubules; mutant sperm present morphological abnormalities of the flagellum and sperm head, and decreased motility (PubMed:12110578). Mutant sperm are able to fertilize oocytes in vitro, but many of the resulting embryos die before the morula stage (PubMed:15161660). Mutant sperm cells have elevated levels of DNA damage and DNA strand breaks, and this may be the cause for embryonic lethality (PubMed:15161660). Mice deficient for both Prnd and Prnp have the same phenotype as mice lacking Prnd; they are born at the expected Mendelian rate and appear grossly normal and healthy (PubMed:15007175, PubMed:15161660). Females are fertile, but males deficient for both Prnd and Prnp are sterile, in spite of normal mating behavior (PubMed:15007175, PubMed:15161660). Again, findings about spermatogenesis are contradictory: spermatogenesis is normal, with normal sperm counts, normal sperm motility, and no malformation of the sperm head or tail (PubMed:15161660). Sperm cells display various malformations (PubMed:15007175). Male sterility is due to impaired acrosome reaction (PubMed:15161660). Aging mice deficient for both Prnd and Prnp do not display loss of cerebellar Purkinje cells or develop ataxia, and do not develop neurological defects (PubMed:15007175).</text>
</comment>
<comment type="miscellaneous">
    <text evidence="2 6">Loss of cerebellar Purkinje cells and ataxia has been observed in mice with mutations that cause Prnd overexpression in the brain, suggesting that aberrant overexpression of Prnd causes neurotoxicity.</text>
</comment>
<comment type="similarity">
    <text evidence="9">Belongs to the prion family.</text>
</comment>
<name>PRND_MOUSE</name>
<dbReference type="EMBL" id="U29187">
    <property type="protein sequence ID" value="AAD52000.1"/>
    <property type="molecule type" value="Genomic_DNA"/>
</dbReference>
<dbReference type="EMBL" id="AF165165">
    <property type="protein sequence ID" value="AAF02544.1"/>
    <property type="molecule type" value="mRNA"/>
</dbReference>
<dbReference type="EMBL" id="AF165166">
    <property type="protein sequence ID" value="AAF02545.1"/>
    <property type="molecule type" value="mRNA"/>
</dbReference>
<dbReference type="EMBL" id="AF192382">
    <property type="protein sequence ID" value="AAF09196.1"/>
    <property type="molecule type" value="mRNA"/>
</dbReference>
<dbReference type="EMBL" id="AF192383">
    <property type="protein sequence ID" value="AAF09197.1"/>
    <property type="molecule type" value="mRNA"/>
</dbReference>
<dbReference type="EMBL" id="AF192384">
    <property type="protein sequence ID" value="AAF09198.1"/>
    <property type="molecule type" value="mRNA"/>
</dbReference>
<dbReference type="EMBL" id="AF192385">
    <property type="protein sequence ID" value="AAF09199.1"/>
    <property type="molecule type" value="mRNA"/>
</dbReference>
<dbReference type="EMBL" id="BC025140">
    <property type="protein sequence ID" value="AAH25140.1"/>
    <property type="molecule type" value="mRNA"/>
</dbReference>
<dbReference type="CCDS" id="CCDS16767.1"/>
<dbReference type="RefSeq" id="NP_001119810.1">
    <property type="nucleotide sequence ID" value="NM_001126338.2"/>
</dbReference>
<dbReference type="RefSeq" id="NP_001265186.1">
    <property type="nucleotide sequence ID" value="NM_001278257.1"/>
</dbReference>
<dbReference type="RefSeq" id="NP_001265449.1">
    <property type="nucleotide sequence ID" value="NM_001278520.1"/>
</dbReference>
<dbReference type="RefSeq" id="NP_075530.1">
    <property type="nucleotide sequence ID" value="NM_023043.3"/>
</dbReference>
<dbReference type="PDB" id="1I17">
    <property type="method" value="NMR"/>
    <property type="chains" value="A=51-157"/>
</dbReference>
<dbReference type="PDB" id="1Z65">
    <property type="method" value="NMR"/>
    <property type="chains" value="A=1-30"/>
</dbReference>
<dbReference type="PDBsum" id="1I17"/>
<dbReference type="PDBsum" id="1Z65"/>
<dbReference type="BMRB" id="Q9QUG3"/>
<dbReference type="SMR" id="Q9QUG3"/>
<dbReference type="BioGRID" id="204986">
    <property type="interactions" value="1"/>
</dbReference>
<dbReference type="FunCoup" id="Q9QUG3">
    <property type="interactions" value="109"/>
</dbReference>
<dbReference type="IntAct" id="Q9QUG3">
    <property type="interactions" value="1"/>
</dbReference>
<dbReference type="STRING" id="10090.ENSMUSP00000105801"/>
<dbReference type="GlyCosmos" id="Q9QUG3">
    <property type="glycosylation" value="2 sites, No reported glycans"/>
</dbReference>
<dbReference type="GlyGen" id="Q9QUG3">
    <property type="glycosylation" value="2 sites"/>
</dbReference>
<dbReference type="iPTMnet" id="Q9QUG3"/>
<dbReference type="PaxDb" id="10090-ENSMUSP00000105801"/>
<dbReference type="ProteomicsDB" id="291743"/>
<dbReference type="DNASU" id="26434"/>
<dbReference type="Ensembl" id="ENSMUST00000110169.2">
    <property type="protein sequence ID" value="ENSMUSP00000105798.2"/>
    <property type="gene ID" value="ENSMUSG00000027338.17"/>
</dbReference>
<dbReference type="Ensembl" id="ENSMUST00000110170.8">
    <property type="protein sequence ID" value="ENSMUSP00000105799.2"/>
    <property type="gene ID" value="ENSMUSG00000027338.17"/>
</dbReference>
<dbReference type="Ensembl" id="ENSMUST00000110171.9">
    <property type="protein sequence ID" value="ENSMUSP00000105800.3"/>
    <property type="gene ID" value="ENSMUSG00000027338.17"/>
</dbReference>
<dbReference type="Ensembl" id="ENSMUST00000110172.9">
    <property type="protein sequence ID" value="ENSMUSP00000105801.3"/>
    <property type="gene ID" value="ENSMUSG00000027338.17"/>
</dbReference>
<dbReference type="GeneID" id="26434"/>
<dbReference type="KEGG" id="mmu:26434"/>
<dbReference type="UCSC" id="uc008mmd.3">
    <property type="organism name" value="mouse"/>
</dbReference>
<dbReference type="AGR" id="MGI:1346999"/>
<dbReference type="CTD" id="23627"/>
<dbReference type="MGI" id="MGI:1346999">
    <property type="gene designation" value="Prnd"/>
</dbReference>
<dbReference type="VEuPathDB" id="HostDB:ENSMUSG00000027338"/>
<dbReference type="eggNOG" id="ENOG502RAT9">
    <property type="taxonomic scope" value="Eukaryota"/>
</dbReference>
<dbReference type="GeneTree" id="ENSGT00390000017668"/>
<dbReference type="HOGENOM" id="CLU_1524583_0_0_1"/>
<dbReference type="InParanoid" id="Q9QUG3"/>
<dbReference type="OrthoDB" id="9523143at2759"/>
<dbReference type="PhylomeDB" id="Q9QUG3"/>
<dbReference type="TreeFam" id="TF337532"/>
<dbReference type="Reactome" id="R-MMU-163125">
    <property type="pathway name" value="Post-translational modification: synthesis of GPI-anchored proteins"/>
</dbReference>
<dbReference type="BioGRID-ORCS" id="26434">
    <property type="hits" value="0 hits in 43 CRISPR screens"/>
</dbReference>
<dbReference type="EvolutionaryTrace" id="Q9QUG3"/>
<dbReference type="PRO" id="PR:Q9QUG3"/>
<dbReference type="Proteomes" id="UP000000589">
    <property type="component" value="Chromosome 2"/>
</dbReference>
<dbReference type="RNAct" id="Q9QUG3">
    <property type="molecule type" value="protein"/>
</dbReference>
<dbReference type="Bgee" id="ENSMUSG00000027338">
    <property type="expression patterns" value="Expressed in mesenchyme of tongue and 50 other cell types or tissues"/>
</dbReference>
<dbReference type="ExpressionAtlas" id="Q9QUG3">
    <property type="expression patterns" value="baseline"/>
</dbReference>
<dbReference type="GO" id="GO:0009897">
    <property type="term" value="C:external side of plasma membrane"/>
    <property type="evidence" value="ECO:0000314"/>
    <property type="project" value="UniProtKB"/>
</dbReference>
<dbReference type="GO" id="GO:0005507">
    <property type="term" value="F:copper ion binding"/>
    <property type="evidence" value="ECO:0000314"/>
    <property type="project" value="MGI"/>
</dbReference>
<dbReference type="GO" id="GO:0007340">
    <property type="term" value="P:acrosome reaction"/>
    <property type="evidence" value="ECO:0000315"/>
    <property type="project" value="UniProtKB"/>
</dbReference>
<dbReference type="GO" id="GO:0006878">
    <property type="term" value="P:intracellular copper ion homeostasis"/>
    <property type="evidence" value="ECO:0000314"/>
    <property type="project" value="MGI"/>
</dbReference>
<dbReference type="GO" id="GO:0051260">
    <property type="term" value="P:protein homooligomerization"/>
    <property type="evidence" value="ECO:0007669"/>
    <property type="project" value="InterPro"/>
</dbReference>
<dbReference type="GO" id="GO:0007338">
    <property type="term" value="P:single fertilization"/>
    <property type="evidence" value="ECO:0000315"/>
    <property type="project" value="UniProtKB"/>
</dbReference>
<dbReference type="FunFam" id="1.10.790.10:FF:000002">
    <property type="entry name" value="Prion-like protein doppel"/>
    <property type="match status" value="1"/>
</dbReference>
<dbReference type="Gene3D" id="1.10.790.10">
    <property type="entry name" value="Prion/Doppel protein, beta-ribbon domain"/>
    <property type="match status" value="1"/>
</dbReference>
<dbReference type="InterPro" id="IPR021566">
    <property type="entry name" value="Doppel"/>
</dbReference>
<dbReference type="InterPro" id="IPR036924">
    <property type="entry name" value="Prion/Doppel_b-ribbon_dom_sf"/>
</dbReference>
<dbReference type="InterPro" id="IPR022416">
    <property type="entry name" value="Prion/Doppel_prot_b-ribbon_dom"/>
</dbReference>
<dbReference type="PANTHER" id="PTHR15506">
    <property type="entry name" value="DOPPEL PRION"/>
    <property type="match status" value="1"/>
</dbReference>
<dbReference type="PANTHER" id="PTHR15506:SF0">
    <property type="entry name" value="PRION-LIKE PROTEIN DOPPEL"/>
    <property type="match status" value="1"/>
</dbReference>
<dbReference type="Pfam" id="PF11466">
    <property type="entry name" value="Doppel"/>
    <property type="match status" value="1"/>
</dbReference>
<dbReference type="Pfam" id="PF00377">
    <property type="entry name" value="Prion"/>
    <property type="match status" value="1"/>
</dbReference>
<dbReference type="SUPFAM" id="SSF54098">
    <property type="entry name" value="Prion-like"/>
    <property type="match status" value="1"/>
</dbReference>
<proteinExistence type="evidence at protein level"/>
<sequence>MKNRLGTWWVAILCMLLASHLSTVKARGIKHRFKWNRKVLPSSGGQITEARVAENRPGAFIKQGRKLDIDFGAEGNRYYAANYWQFPDGIYYEGCSEANVTKEMLVTSCVNATQAANQAEFSREKQDSKLHQRVLWRLIKEICSAKHCDFWLERGAALRVAVDQPAMVCLLGFVWFIVK</sequence>
<evidence type="ECO:0000250" key="1">
    <source>
        <dbReference type="UniProtKB" id="Q9UKY0"/>
    </source>
</evidence>
<evidence type="ECO:0000269" key="2">
    <source>
    </source>
</evidence>
<evidence type="ECO:0000269" key="3">
    <source>
    </source>
</evidence>
<evidence type="ECO:0000269" key="4">
    <source>
    </source>
</evidence>
<evidence type="ECO:0000269" key="5">
    <source>
    </source>
</evidence>
<evidence type="ECO:0000269" key="6">
    <source>
    </source>
</evidence>
<evidence type="ECO:0000269" key="7">
    <source>
    </source>
</evidence>
<evidence type="ECO:0000303" key="8">
    <source>
    </source>
</evidence>
<evidence type="ECO:0000305" key="9"/>
<evidence type="ECO:0000305" key="10">
    <source>
    </source>
</evidence>
<evidence type="ECO:0007744" key="11">
    <source>
        <dbReference type="PDB" id="1I17"/>
    </source>
</evidence>
<evidence type="ECO:0007744" key="12">
    <source>
        <dbReference type="PDB" id="1Z65"/>
    </source>
</evidence>
<evidence type="ECO:0007829" key="13">
    <source>
        <dbReference type="PDB" id="1I17"/>
    </source>
</evidence>
<evidence type="ECO:0007829" key="14">
    <source>
        <dbReference type="PDB" id="1Z65"/>
    </source>
</evidence>
<organism>
    <name type="scientific">Mus musculus</name>
    <name type="common">Mouse</name>
    <dbReference type="NCBI Taxonomy" id="10090"/>
    <lineage>
        <taxon>Eukaryota</taxon>
        <taxon>Metazoa</taxon>
        <taxon>Chordata</taxon>
        <taxon>Craniata</taxon>
        <taxon>Vertebrata</taxon>
        <taxon>Euteleostomi</taxon>
        <taxon>Mammalia</taxon>
        <taxon>Eutheria</taxon>
        <taxon>Euarchontoglires</taxon>
        <taxon>Glires</taxon>
        <taxon>Rodentia</taxon>
        <taxon>Myomorpha</taxon>
        <taxon>Muroidea</taxon>
        <taxon>Muridae</taxon>
        <taxon>Murinae</taxon>
        <taxon>Mus</taxon>
        <taxon>Mus</taxon>
    </lineage>
</organism>
<protein>
    <recommendedName>
        <fullName>Prion-like protein doppel</fullName>
    </recommendedName>
    <alternativeName>
        <fullName>Doppelganger</fullName>
        <shortName evidence="8">Dpl</shortName>
    </alternativeName>
    <alternativeName>
        <fullName>PrPLP</fullName>
    </alternativeName>
</protein>
<gene>
    <name type="primary">Prnd</name>
</gene>
<accession>Q9QUG3</accession>
<accession>Q9QZT5</accession>
<keyword id="KW-0002">3D-structure</keyword>
<keyword id="KW-0034">Amyloid</keyword>
<keyword id="KW-1003">Cell membrane</keyword>
<keyword id="KW-0186">Copper</keyword>
<keyword id="KW-1015">Disulfide bond</keyword>
<keyword id="KW-0278">Fertilization</keyword>
<keyword id="KW-0325">Glycoprotein</keyword>
<keyword id="KW-0336">GPI-anchor</keyword>
<keyword id="KW-0449">Lipoprotein</keyword>
<keyword id="KW-0472">Membrane</keyword>
<keyword id="KW-0479">Metal-binding</keyword>
<keyword id="KW-0640">Prion</keyword>
<keyword id="KW-1185">Reference proteome</keyword>
<keyword id="KW-0732">Signal</keyword>
<feature type="signal peptide" evidence="1">
    <location>
        <begin position="1"/>
        <end position="25"/>
    </location>
</feature>
<feature type="chain" id="PRO_0000025747" description="Prion-like protein doppel">
    <location>
        <begin position="26"/>
        <end position="155"/>
    </location>
</feature>
<feature type="propeptide" id="PRO_0000025748" description="Removed in mature form" evidence="10">
    <location>
        <begin position="156"/>
        <end position="179"/>
    </location>
</feature>
<feature type="region of interest" description="Flexible tail">
    <location>
        <begin position="27"/>
        <end position="50"/>
    </location>
</feature>
<feature type="region of interest" description="Globular">
    <location>
        <begin position="51"/>
        <end position="155"/>
    </location>
</feature>
<feature type="region of interest" description="Cu(2+) binding" evidence="1">
    <location>
        <begin position="125"/>
        <end position="142"/>
    </location>
</feature>
<feature type="lipid moiety-binding region" description="GPI-anchor amidated glycine" evidence="10">
    <location>
        <position position="155"/>
    </location>
</feature>
<feature type="glycosylation site" description="N-linked (GlcNAc...) asparagine" evidence="10">
    <location>
        <position position="99"/>
    </location>
</feature>
<feature type="glycosylation site" description="N-linked (GlcNAc...) asparagine" evidence="10">
    <location>
        <position position="111"/>
    </location>
</feature>
<feature type="disulfide bond" evidence="3 4 11">
    <location>
        <begin position="95"/>
        <end position="148"/>
    </location>
</feature>
<feature type="disulfide bond" evidence="3 4 11">
    <location>
        <begin position="109"/>
        <end position="143"/>
    </location>
</feature>
<feature type="sequence conflict" description="In Ref. 1; AAF02545." evidence="9" ref="1">
    <original>A</original>
    <variation>P</variation>
    <location>
        <position position="156"/>
    </location>
</feature>
<feature type="helix" evidence="14">
    <location>
        <begin position="8"/>
        <end position="20"/>
    </location>
</feature>
<feature type="turn" evidence="14">
    <location>
        <begin position="21"/>
        <end position="24"/>
    </location>
</feature>
<feature type="strand" evidence="13">
    <location>
        <begin position="59"/>
        <end position="61"/>
    </location>
</feature>
<feature type="helix" evidence="13">
    <location>
        <begin position="73"/>
        <end position="82"/>
    </location>
</feature>
<feature type="helix" evidence="13">
    <location>
        <begin position="83"/>
        <end position="85"/>
    </location>
</feature>
<feature type="strand" evidence="13">
    <location>
        <begin position="88"/>
        <end position="91"/>
    </location>
</feature>
<feature type="helix" evidence="13">
    <location>
        <begin position="102"/>
        <end position="116"/>
    </location>
</feature>
<feature type="helix" evidence="13">
    <location>
        <begin position="118"/>
        <end position="125"/>
    </location>
</feature>
<feature type="helix" evidence="13">
    <location>
        <begin position="129"/>
        <end position="145"/>
    </location>
</feature>
<reference key="1">
    <citation type="journal article" date="1999" name="J. Mol. Biol.">
        <title>Ataxia in prion protein (PrP)-deficient mice is associated with upregulation of the novel PrP-like protein doppel.</title>
        <authorList>
            <person name="Moore R.C."/>
            <person name="Lee I.Y."/>
            <person name="Silverman G.L."/>
            <person name="Harrison P.M."/>
            <person name="Strome R."/>
            <person name="Heinrich C."/>
            <person name="Karunaratne A."/>
            <person name="Pasternak S.H."/>
            <person name="Chishti M.A."/>
            <person name="Liang Y."/>
            <person name="Mastrangelo P."/>
            <person name="Wang K."/>
            <person name="Smit A.F.A."/>
            <person name="Katamine S."/>
            <person name="Carlson G.A."/>
            <person name="Cohen F.E."/>
            <person name="Prusiner S.B."/>
            <person name="Melton D.W."/>
            <person name="Tremblay P."/>
            <person name="Hood L.E."/>
            <person name="Westaway D."/>
        </authorList>
    </citation>
    <scope>NUCLEOTIDE SEQUENCE [GENOMIC DNA / MRNA]</scope>
    <scope>DEVELOPMENTAL STAGE</scope>
    <scope>TISSUE SPECIFICITY</scope>
    <source>
        <strain>BALB/cJ</strain>
    </source>
</reference>
<reference key="2">
    <citation type="journal article" date="2000" name="Cell. Mol. Neurobiol.">
        <title>Identification of a novel gene encoding a PrP-like protein expressed as chimeric transcripts fused to PrP exon1/2 in ataxic mouse line with a disrupted PrP gene.</title>
        <authorList>
            <person name="Li A."/>
            <person name="Sakaguchi S."/>
            <person name="Atarashi R."/>
            <person name="Roy B.C."/>
            <person name="Nakaoke R."/>
            <person name="Arima K."/>
            <person name="Okimura N."/>
            <person name="Kopacek J."/>
            <person name="Shigematu K."/>
        </authorList>
    </citation>
    <scope>NUCLEOTIDE SEQUENCE [MRNA]</scope>
    <source>
        <strain>129/Sv</strain>
        <strain>C57BL/6J</strain>
    </source>
</reference>
<reference key="3">
    <citation type="journal article" date="2004" name="Genome Res.">
        <title>The status, quality, and expansion of the NIH full-length cDNA project: the Mammalian Gene Collection (MGC).</title>
        <authorList>
            <consortium name="The MGC Project Team"/>
        </authorList>
    </citation>
    <scope>NUCLEOTIDE SEQUENCE [LARGE SCALE MRNA]</scope>
</reference>
<reference key="4">
    <citation type="journal article" date="2000" name="J. Biol. Chem.">
        <title>Doppel is an N-glycosylated, glycosylphosphatidylinositol-anchored protein: expression in testis and ectopic production in the brains of Prnp(0/0) mice predisposed to Purkinje cell loss.</title>
        <authorList>
            <person name="Silverman G.L."/>
            <person name="Qin K."/>
            <person name="Moore R.C."/>
            <person name="Yang Y."/>
            <person name="Mastrangelo P."/>
            <person name="Tremblay P."/>
            <person name="Prusiner S.B."/>
            <person name="Cohen F.E."/>
            <person name="Westaway D."/>
        </authorList>
    </citation>
    <scope>DISULFIDE BOND</scope>
    <scope>GPI-ANCHOR AT GLY-155</scope>
    <scope>GLYCOSYLATION</scope>
    <scope>SUBCELLULAR LOCATION</scope>
    <scope>TOPOLOGY</scope>
    <scope>TISSUE SPECIFICITY</scope>
</reference>
<reference key="5">
    <citation type="journal article" date="2002" name="EMBO J.">
        <title>Absence of the prion protein homologue Doppel causes male sterility.</title>
        <authorList>
            <person name="Behrens A."/>
            <person name="Genoud N."/>
            <person name="Naumann H."/>
            <person name="Ruelicke T."/>
            <person name="Janett F."/>
            <person name="Heppner F.L."/>
            <person name="Ledermann B."/>
            <person name="Aguzzi A."/>
        </authorList>
    </citation>
    <scope>DISRUPTION PHENOTYPE</scope>
    <scope>FUNCTION</scope>
    <scope>TISSUE SPECIFICITY</scope>
</reference>
<reference key="6">
    <citation type="journal article" date="2004" name="Am. J. Pathol.">
        <title>Male infertility and DNA damage in Doppel knockout and prion protein/Doppel double-knockout mice.</title>
        <authorList>
            <person name="Paisley D."/>
            <person name="Banks S."/>
            <person name="Selfridge J."/>
            <person name="McLennan N.F."/>
            <person name="Ritchie A.M."/>
            <person name="McEwan C."/>
            <person name="Irvine D.S."/>
            <person name="Saunders P.T."/>
            <person name="Manson J.C."/>
            <person name="Melton D.W."/>
        </authorList>
    </citation>
    <scope>DISRUPTION PHENOTYPE</scope>
    <scope>FUNCTION</scope>
    <scope>TISSUE SPECIFICITY</scope>
</reference>
<reference key="7">
    <citation type="journal article" date="2004" name="Proc. Natl. Acad. Sci. U.S.A.">
        <title>Disruption of Doppel prevents neurodegeneration in mice with extensive Prnp deletions.</title>
        <authorList>
            <person name="Genoud N."/>
            <person name="Behrens A."/>
            <person name="Miele G."/>
            <person name="Robay D."/>
            <person name="Heppner F.L."/>
            <person name="Freigang S."/>
            <person name="Aguzzi A."/>
        </authorList>
    </citation>
    <scope>DISRUPTION PHENOTYPE</scope>
    <scope>FUNCTION</scope>
</reference>
<reference key="8">
    <citation type="journal article" date="2001" name="Proc. Natl. Acad. Sci. U.S.A.">
        <title>Two different neurodegenerative diseases caused by proteins with similar structures.</title>
        <authorList>
            <person name="Mo H."/>
            <person name="Moore R.C."/>
            <person name="Cohen F.E."/>
            <person name="Westaway D."/>
            <person name="Prusiner S.B."/>
            <person name="Wright P.E."/>
            <person name="Dyson H.J."/>
        </authorList>
    </citation>
    <scope>STRUCTURE BY NMR OF 51-157</scope>
    <scope>DISULFIDE BONDS</scope>
</reference>
<reference evidence="12" key="9">
    <citation type="journal article" date="2006" name="Biochemistry">
        <title>NMR solution structure of the peptide fragment 1-30, derived from unprocessed mouse Doppel protein, in DHPC micelles.</title>
        <authorList>
            <person name="Papadopoulos E."/>
            <person name="Oglecka K."/>
            <person name="Maler L."/>
            <person name="Jarvet J."/>
            <person name="Wright P.E."/>
            <person name="Dyson H.J."/>
            <person name="Graslund A."/>
        </authorList>
    </citation>
    <scope>STRUCTURE BY NMR OF 1-30</scope>
</reference>